<sequence>MSPRKTYILKLYVAGNTPNSMRALKTLRNILETEFLGVYALKVIDVLKQPQLAEEDKILATPTLAKILPPPVRRIIGDLSDRERVLIGLDLLYEELSDDSNAQVLDDFSE</sequence>
<gene>
    <name evidence="1" type="primary">kaiB</name>
    <name type="ordered locus">SynRCC307_1825</name>
</gene>
<proteinExistence type="inferred from homology"/>
<accession>A5GV19</accession>
<feature type="chain" id="PRO_1000070463" description="Circadian clock oscillator protein KaiB">
    <location>
        <begin position="1"/>
        <end position="110"/>
    </location>
</feature>
<name>KAIB_SYNR3</name>
<dbReference type="EMBL" id="CT978603">
    <property type="protein sequence ID" value="CAK28728.1"/>
    <property type="molecule type" value="Genomic_DNA"/>
</dbReference>
<dbReference type="SMR" id="A5GV19"/>
<dbReference type="STRING" id="316278.SynRCC307_1825"/>
<dbReference type="KEGG" id="syr:SynRCC307_1825"/>
<dbReference type="eggNOG" id="COG4251">
    <property type="taxonomic scope" value="Bacteria"/>
</dbReference>
<dbReference type="HOGENOM" id="CLU_144073_0_0_3"/>
<dbReference type="OrthoDB" id="5458519at2"/>
<dbReference type="Proteomes" id="UP000001115">
    <property type="component" value="Chromosome"/>
</dbReference>
<dbReference type="GO" id="GO:0007623">
    <property type="term" value="P:circadian rhythm"/>
    <property type="evidence" value="ECO:0007669"/>
    <property type="project" value="UniProtKB-UniRule"/>
</dbReference>
<dbReference type="CDD" id="cd02978">
    <property type="entry name" value="KaiB_like"/>
    <property type="match status" value="1"/>
</dbReference>
<dbReference type="Gene3D" id="3.40.30.10">
    <property type="entry name" value="Glutaredoxin"/>
    <property type="match status" value="1"/>
</dbReference>
<dbReference type="HAMAP" id="MF_01835">
    <property type="entry name" value="KaiB"/>
    <property type="match status" value="1"/>
</dbReference>
<dbReference type="InterPro" id="IPR013474">
    <property type="entry name" value="Circ_KaiB"/>
</dbReference>
<dbReference type="InterPro" id="IPR039022">
    <property type="entry name" value="KaiB-like"/>
</dbReference>
<dbReference type="InterPro" id="IPR011649">
    <property type="entry name" value="KaiB_domain"/>
</dbReference>
<dbReference type="InterPro" id="IPR036249">
    <property type="entry name" value="Thioredoxin-like_sf"/>
</dbReference>
<dbReference type="NCBIfam" id="TIGR02654">
    <property type="entry name" value="circ_KaiB"/>
    <property type="match status" value="1"/>
</dbReference>
<dbReference type="NCBIfam" id="NF006798">
    <property type="entry name" value="PRK09301.1"/>
    <property type="match status" value="1"/>
</dbReference>
<dbReference type="PANTHER" id="PTHR41709:SF2">
    <property type="entry name" value="CIRCADIAN CLOCK PROTEIN KAIB2"/>
    <property type="match status" value="1"/>
</dbReference>
<dbReference type="PANTHER" id="PTHR41709">
    <property type="entry name" value="KAIB-LIKE PROTEIN 1"/>
    <property type="match status" value="1"/>
</dbReference>
<dbReference type="Pfam" id="PF07689">
    <property type="entry name" value="KaiB"/>
    <property type="match status" value="1"/>
</dbReference>
<dbReference type="SMART" id="SM01248">
    <property type="entry name" value="KaiB"/>
    <property type="match status" value="1"/>
</dbReference>
<dbReference type="SUPFAM" id="SSF52833">
    <property type="entry name" value="Thioredoxin-like"/>
    <property type="match status" value="1"/>
</dbReference>
<comment type="function">
    <text evidence="1">Key component of the KaiABC oscillator complex, which constitutes the main circadian regulator in cyanobacteria. Complex composition changes during the circadian cycle to control KaiC phosphorylation. KaiA stimulates KaiC autophosphorylation, while KaiB sequesters KaiA, leading to KaiC autodephosphorylation. Phospho-Ser-431 KaiC accumulation triggers binding of KaiB to form the KaiB(6):KaiC(6) complex, leading to changes in output regulators CikA and SasA. KaiB switches to a thioredoxin-like fold (KaiB(fs)) when bound to KaiC. KaiB(6):KaiC(6) formation exposes a site for KaiA binding that sequesters KaiA from KaiC, making the KaiC(6):KaiB(6):KaiA(12) complex that results in KaiC autodephosphorylation.</text>
</comment>
<comment type="function">
    <text evidence="1">A metamorphic protein which reversibly switches between an inactive tetrameric fold and a rare, thioredoxin-like monomeric fold (KaiB(fs)). KaiB(fs) binds phospho-KaiC, KaiA and CikA. KaiA and CikA compete for binding to KaiB(fs), and KaiB(fs) and SasA compete for binding to KaiC, thus the clock oscillator and output signal pathway are tightly coupled.</text>
</comment>
<comment type="subunit">
    <text evidence="1">The KaiABC complex composition changes during the circadian cycle to control KaiC phosphorylation. Complexes KaiC(6), KaiA(2-4):KaiC(6), KaiB(6):KaiC(6) and KaiC(6):KaiB(6):KaiA(12) are among the most important forms, many form cooperatively. Undergoes a major conformational rearrangment; in the free state forms homotetramers as a dimer of dimers. When bound to the CI domain of KaiC switches to a monomeric thioredoxin-fold (KaiB(fs)). KaiB(fs) binds CikA, leading it to dephosphorylate phospho-RpaA.</text>
</comment>
<comment type="domain">
    <text evidence="1">Has 2 forms, fold switches to a thioredoxin-like fold (KaiB(fs)) when bound to KaiC.</text>
</comment>
<comment type="similarity">
    <text evidence="1">Belongs to the KaiB family.</text>
</comment>
<keyword id="KW-0090">Biological rhythms</keyword>
<keyword id="KW-1185">Reference proteome</keyword>
<evidence type="ECO:0000255" key="1">
    <source>
        <dbReference type="HAMAP-Rule" id="MF_01835"/>
    </source>
</evidence>
<protein>
    <recommendedName>
        <fullName evidence="1">Circadian clock oscillator protein KaiB</fullName>
    </recommendedName>
</protein>
<reference key="1">
    <citation type="submission" date="2006-05" db="EMBL/GenBank/DDBJ databases">
        <authorList>
            <consortium name="Genoscope"/>
        </authorList>
    </citation>
    <scope>NUCLEOTIDE SEQUENCE [LARGE SCALE GENOMIC DNA]</scope>
    <source>
        <strain>RCC307</strain>
    </source>
</reference>
<organism>
    <name type="scientific">Synechococcus sp. (strain RCC307)</name>
    <dbReference type="NCBI Taxonomy" id="316278"/>
    <lineage>
        <taxon>Bacteria</taxon>
        <taxon>Bacillati</taxon>
        <taxon>Cyanobacteriota</taxon>
        <taxon>Cyanophyceae</taxon>
        <taxon>Synechococcales</taxon>
        <taxon>Synechococcaceae</taxon>
        <taxon>Synechococcus</taxon>
    </lineage>
</organism>